<feature type="chain" id="PRO_0000418060" description="Cell shape-determining protein MreC" evidence="2">
    <location>
        <begin position="1"/>
        <end position="272"/>
    </location>
</feature>
<feature type="topological domain" description="Cytoplasmic" evidence="7">
    <location>
        <begin position="1"/>
        <end position="8"/>
    </location>
</feature>
<feature type="transmembrane region" description="Helical" evidence="2">
    <location>
        <begin position="9"/>
        <end position="29"/>
    </location>
</feature>
<feature type="topological domain" description="Extracellular" evidence="7">
    <location>
        <begin position="30"/>
        <end position="272"/>
    </location>
</feature>
<feature type="coiled-coil region" evidence="2">
    <location>
        <begin position="64"/>
        <end position="112"/>
    </location>
</feature>
<feature type="mutagenesis site" description="Cells are round instead of ovoid, protein no longer interacts with MreD." evidence="4">
    <location>
        <begin position="183"/>
        <end position="272"/>
    </location>
</feature>
<feature type="strand" evidence="10">
    <location>
        <begin position="111"/>
        <end position="121"/>
    </location>
</feature>
<feature type="strand" evidence="10">
    <location>
        <begin position="129"/>
        <end position="133"/>
    </location>
</feature>
<feature type="helix" evidence="10">
    <location>
        <begin position="136"/>
        <end position="138"/>
    </location>
</feature>
<feature type="strand" evidence="10">
    <location>
        <begin position="145"/>
        <end position="148"/>
    </location>
</feature>
<feature type="strand" evidence="10">
    <location>
        <begin position="151"/>
        <end position="159"/>
    </location>
</feature>
<feature type="strand" evidence="10">
    <location>
        <begin position="164"/>
        <end position="168"/>
    </location>
</feature>
<feature type="strand" evidence="10">
    <location>
        <begin position="171"/>
        <end position="184"/>
    </location>
</feature>
<feature type="strand" evidence="10">
    <location>
        <begin position="187"/>
        <end position="197"/>
    </location>
</feature>
<feature type="turn" evidence="10">
    <location>
        <begin position="198"/>
        <end position="201"/>
    </location>
</feature>
<feature type="strand" evidence="10">
    <location>
        <begin position="202"/>
        <end position="206"/>
    </location>
</feature>
<feature type="strand" evidence="10">
    <location>
        <begin position="219"/>
        <end position="223"/>
    </location>
</feature>
<feature type="strand" evidence="10">
    <location>
        <begin position="226"/>
        <end position="228"/>
    </location>
</feature>
<feature type="strand" evidence="10">
    <location>
        <begin position="231"/>
        <end position="242"/>
    </location>
</feature>
<feature type="strand" evidence="10">
    <location>
        <begin position="251"/>
        <end position="258"/>
    </location>
</feature>
<feature type="strand" evidence="10">
    <location>
        <begin position="265"/>
        <end position="271"/>
    </location>
</feature>
<reference evidence="8" key="1">
    <citation type="journal article" date="2001" name="J. Bacteriol.">
        <title>Genome of the bacterium Streptococcus pneumoniae strain R6.</title>
        <authorList>
            <person name="Hoskins J."/>
            <person name="Alborn W.E. Jr."/>
            <person name="Arnold J."/>
            <person name="Blaszczak L.C."/>
            <person name="Burgett S."/>
            <person name="DeHoff B.S."/>
            <person name="Estrem S.T."/>
            <person name="Fritz L."/>
            <person name="Fu D.-J."/>
            <person name="Fuller W."/>
            <person name="Geringer C."/>
            <person name="Gilmour R."/>
            <person name="Glass J.S."/>
            <person name="Khoja H."/>
            <person name="Kraft A.R."/>
            <person name="Lagace R.E."/>
            <person name="LeBlanc D.J."/>
            <person name="Lee L.N."/>
            <person name="Lefkowitz E.J."/>
            <person name="Lu J."/>
            <person name="Matsushima P."/>
            <person name="McAhren S.M."/>
            <person name="McHenney M."/>
            <person name="McLeaster K."/>
            <person name="Mundy C.W."/>
            <person name="Nicas T.I."/>
            <person name="Norris F.H."/>
            <person name="O'Gara M."/>
            <person name="Peery R.B."/>
            <person name="Robertson G.T."/>
            <person name="Rockey P."/>
            <person name="Sun P.-M."/>
            <person name="Winkler M.E."/>
            <person name="Yang Y."/>
            <person name="Young-Bellido M."/>
            <person name="Zhao G."/>
            <person name="Zook C.A."/>
            <person name="Baltz R.H."/>
            <person name="Jaskunas S.R."/>
            <person name="Rosteck P.R. Jr."/>
            <person name="Skatrud P.L."/>
            <person name="Glass J.I."/>
        </authorList>
    </citation>
    <scope>NUCLEOTIDE SEQUENCE [LARGE SCALE GENOMIC DNA]</scope>
    <source>
        <strain>ATCC BAA-255 / R6</strain>
    </source>
</reference>
<reference key="2">
    <citation type="journal article" date="2017" name="Mol. Microbiol.">
        <title>Identification of EloR (Spr1851) as a regulator of cell elongation in Streptococcus pneumoniae.</title>
        <authorList>
            <person name="Stamsaas G.A."/>
            <person name="Straume D."/>
            <person name="Ruud Winther A."/>
            <person name="Kjos M."/>
            <person name="Frantzen C.A."/>
            <person name="Haavarstein L.S."/>
        </authorList>
    </citation>
    <scope>FUNCTION</scope>
    <scope>SUBUNIT</scope>
    <scope>DOMAIN</scope>
    <scope>DISRUPTION PHENOTYPE</scope>
    <scope>MUTAGENESIS OF 183-GLN--SER-272</scope>
    <source>
        <strain>R6 / R704</strain>
    </source>
</reference>
<reference evidence="9" key="3">
    <citation type="journal article" date="2007" name="J. Mol. Biol.">
        <title>High-resolution structure of the major periplasmic domain from the cell shape-determining filament MreC.</title>
        <authorList>
            <person name="Lovering A.L."/>
            <person name="Strynadka N.C."/>
        </authorList>
    </citation>
    <scope>X-RAY CRYSTALLOGRAPHY (1.20 ANGSTROMS) OF 106-272</scope>
    <scope>SUBUNIT</scope>
    <source>
        <strain evidence="3">ATCC BAA-255 / R6</strain>
    </source>
</reference>
<evidence type="ECO:0000250" key="1">
    <source>
        <dbReference type="UniProtKB" id="Q01466"/>
    </source>
</evidence>
<evidence type="ECO:0000255" key="2"/>
<evidence type="ECO:0000269" key="3">
    <source>
    </source>
</evidence>
<evidence type="ECO:0000269" key="4">
    <source>
    </source>
</evidence>
<evidence type="ECO:0000303" key="5">
    <source>
    </source>
</evidence>
<evidence type="ECO:0000305" key="6"/>
<evidence type="ECO:0000305" key="7">
    <source>
    </source>
</evidence>
<evidence type="ECO:0000312" key="8">
    <source>
        <dbReference type="EMBL" id="AAL00825.1"/>
    </source>
</evidence>
<evidence type="ECO:0000312" key="9">
    <source>
        <dbReference type="PDB" id="2QF4"/>
    </source>
</evidence>
<evidence type="ECO:0007829" key="10">
    <source>
        <dbReference type="PDB" id="2QF5"/>
    </source>
</evidence>
<gene>
    <name evidence="8" type="primary">mreC</name>
    <name type="ordered locus">spr2023</name>
</gene>
<sequence>MNRFKKSKYVIIVFVTVLLVSALLATTYSSTIVTKLGDGISLVDRVVQKPFQWFDSVKSDLAHLTRTYNENESLKKQLYQLEVKSNEVESLKTENEQLRQLLDMKSKLQATKTLAADVIMRSPVSWKQELTLDAGRSKGASENMLAIANGGLIGSVSKVEENSTIVNLLTNTENADKISVKIQHGSTTIYGIIIGYDKENDVLKISQLNSNSDISAGDKVTTGGLGNFNVADIPVGEVVATTHSTDYLTREVTVKLSADTHNVDVIELVGNS</sequence>
<dbReference type="EMBL" id="AE007317">
    <property type="protein sequence ID" value="AAL00825.1"/>
    <property type="molecule type" value="Genomic_DNA"/>
</dbReference>
<dbReference type="PIR" id="A95259">
    <property type="entry name" value="A95259"/>
</dbReference>
<dbReference type="PIR" id="D98124">
    <property type="entry name" value="D98124"/>
</dbReference>
<dbReference type="RefSeq" id="NP_359614.1">
    <property type="nucleotide sequence ID" value="NC_003098.1"/>
</dbReference>
<dbReference type="RefSeq" id="WP_001078983.1">
    <property type="nucleotide sequence ID" value="NC_003098.1"/>
</dbReference>
<dbReference type="PDB" id="2QF4">
    <property type="method" value="X-ray"/>
    <property type="resolution" value="1.20 A"/>
    <property type="chains" value="A/B=106-272"/>
</dbReference>
<dbReference type="PDB" id="2QF5">
    <property type="method" value="X-ray"/>
    <property type="resolution" value="2.23 A"/>
    <property type="chains" value="A=106-272"/>
</dbReference>
<dbReference type="PDBsum" id="2QF4"/>
<dbReference type="PDBsum" id="2QF5"/>
<dbReference type="SMR" id="Q8DMY2"/>
<dbReference type="BioGRID" id="4182238">
    <property type="interactions" value="3"/>
</dbReference>
<dbReference type="STRING" id="171101.spr2023"/>
<dbReference type="GeneID" id="45652562"/>
<dbReference type="KEGG" id="spr:spr2023"/>
<dbReference type="PATRIC" id="fig|171101.6.peg.2189"/>
<dbReference type="eggNOG" id="COG1792">
    <property type="taxonomic scope" value="Bacteria"/>
</dbReference>
<dbReference type="HOGENOM" id="CLU_042663_1_1_9"/>
<dbReference type="EvolutionaryTrace" id="Q8DMY2"/>
<dbReference type="Proteomes" id="UP000000586">
    <property type="component" value="Chromosome"/>
</dbReference>
<dbReference type="GO" id="GO:0005886">
    <property type="term" value="C:plasma membrane"/>
    <property type="evidence" value="ECO:0000318"/>
    <property type="project" value="GO_Central"/>
</dbReference>
<dbReference type="GO" id="GO:0008360">
    <property type="term" value="P:regulation of cell shape"/>
    <property type="evidence" value="ECO:0000318"/>
    <property type="project" value="GO_Central"/>
</dbReference>
<dbReference type="Gene3D" id="2.40.10.340">
    <property type="entry name" value="Rod shape-determining protein MreC, domain 1"/>
    <property type="match status" value="1"/>
</dbReference>
<dbReference type="Gene3D" id="2.40.10.350">
    <property type="entry name" value="Rod shape-determining protein MreC, domain 2"/>
    <property type="match status" value="1"/>
</dbReference>
<dbReference type="InterPro" id="IPR042177">
    <property type="entry name" value="Cell/Rod_1"/>
</dbReference>
<dbReference type="InterPro" id="IPR042175">
    <property type="entry name" value="Cell/Rod_MreC_2"/>
</dbReference>
<dbReference type="InterPro" id="IPR007221">
    <property type="entry name" value="MreC"/>
</dbReference>
<dbReference type="InterPro" id="IPR055342">
    <property type="entry name" value="MreC_beta-barrel_core"/>
</dbReference>
<dbReference type="NCBIfam" id="TIGR00219">
    <property type="entry name" value="mreC"/>
    <property type="match status" value="1"/>
</dbReference>
<dbReference type="PANTHER" id="PTHR34138">
    <property type="entry name" value="CELL SHAPE-DETERMINING PROTEIN MREC"/>
    <property type="match status" value="1"/>
</dbReference>
<dbReference type="PANTHER" id="PTHR34138:SF1">
    <property type="entry name" value="CELL SHAPE-DETERMINING PROTEIN MREC"/>
    <property type="match status" value="1"/>
</dbReference>
<dbReference type="Pfam" id="PF04085">
    <property type="entry name" value="MreC"/>
    <property type="match status" value="1"/>
</dbReference>
<dbReference type="PIRSF" id="PIRSF038471">
    <property type="entry name" value="MreC"/>
    <property type="match status" value="1"/>
</dbReference>
<keyword id="KW-0002">3D-structure</keyword>
<keyword id="KW-1003">Cell membrane</keyword>
<keyword id="KW-0133">Cell shape</keyword>
<keyword id="KW-0175">Coiled coil</keyword>
<keyword id="KW-0472">Membrane</keyword>
<keyword id="KW-1185">Reference proteome</keyword>
<keyword id="KW-0812">Transmembrane</keyword>
<keyword id="KW-1133">Transmembrane helix</keyword>
<comment type="function">
    <text evidence="4">Involved in formation and maintenance of cell shape, probably part of the elongasome which synthesizes peripheral peptidoglycan (PG).</text>
</comment>
<comment type="subunit">
    <text evidence="4 7">Homodimer (Probable). Interacts with a number of proteins in the elongasome, including PBP1a (pbpA), PBP1b, PBP2a, PBP2b (penA), StkP, MltG, MreD and RodZ (PubMed:28710862).</text>
</comment>
<comment type="subcellular location">
    <subcellularLocation>
        <location evidence="2">Cell membrane</location>
        <topology evidence="2">Single-pass membrane protein</topology>
    </subcellularLocation>
</comment>
<comment type="domain">
    <text evidence="4">Deletion of the C-terminus (residues 183-272, CTD) suppresses activating mutations in khpB (also called eloR/jag); the deletion no longer interacts with MreD and interacts less efficiently with PBP1b and StkP, CTD deletion leads to increased phosphorylation of KhpB.</text>
</comment>
<comment type="disruption phenotype">
    <text evidence="4">Cell shape does not change, cells start autolysing earlier. Neither PBP2b (penA) nor rodA can be deleted when this gene is absent.</text>
</comment>
<comment type="similarity">
    <text evidence="6">Belongs to the MreC family.</text>
</comment>
<protein>
    <recommendedName>
        <fullName evidence="5 8">Cell shape-determining protein MreC</fullName>
    </recommendedName>
    <alternativeName>
        <fullName evidence="1">Cell shape protein MreC</fullName>
    </alternativeName>
</protein>
<name>MREC_STRR6</name>
<accession>Q8DMY2</accession>
<organism>
    <name type="scientific">Streptococcus pneumoniae (strain ATCC BAA-255 / R6)</name>
    <dbReference type="NCBI Taxonomy" id="171101"/>
    <lineage>
        <taxon>Bacteria</taxon>
        <taxon>Bacillati</taxon>
        <taxon>Bacillota</taxon>
        <taxon>Bacilli</taxon>
        <taxon>Lactobacillales</taxon>
        <taxon>Streptococcaceae</taxon>
        <taxon>Streptococcus</taxon>
    </lineage>
</organism>
<proteinExistence type="evidence at protein level"/>